<accession>Q8YE36</accession>
<comment type="catalytic activity">
    <reaction>
        <text>1-(5-phospho-beta-D-ribosyl)-5-[(5-phospho-beta-D-ribosylamino)methylideneamino]imidazole-4-carboxamide = 5-[(5-phospho-1-deoxy-D-ribulos-1-ylimino)methylamino]-1-(5-phospho-beta-D-ribosyl)imidazole-4-carboxamide</text>
        <dbReference type="Rhea" id="RHEA:15469"/>
        <dbReference type="ChEBI" id="CHEBI:58435"/>
        <dbReference type="ChEBI" id="CHEBI:58525"/>
        <dbReference type="EC" id="5.3.1.16"/>
    </reaction>
</comment>
<comment type="pathway">
    <text>Amino-acid biosynthesis; L-histidine biosynthesis; L-histidine from 5-phospho-alpha-D-ribose 1-diphosphate: step 4/9.</text>
</comment>
<comment type="subcellular location">
    <subcellularLocation>
        <location evidence="1">Cytoplasm</location>
    </subcellularLocation>
</comment>
<comment type="similarity">
    <text evidence="2">Belongs to the HisA/HisF family.</text>
</comment>
<proteinExistence type="inferred from homology"/>
<gene>
    <name type="primary">hisA</name>
    <name type="ordered locus">BMEI2042</name>
</gene>
<name>HIS4_BRUME</name>
<evidence type="ECO:0000250" key="1"/>
<evidence type="ECO:0000305" key="2"/>
<protein>
    <recommendedName>
        <fullName>1-(5-phosphoribosyl)-5-[(5-phosphoribosylamino)methylideneamino] imidazole-4-carboxamide isomerase</fullName>
        <ecNumber>5.3.1.16</ecNumber>
    </recommendedName>
    <alternativeName>
        <fullName>Phosphoribosylformimino-5-aminoimidazole carboxamide ribotide isomerase</fullName>
    </alternativeName>
</protein>
<sequence>MILFPAIDLKDGQCVRLKLGDMDQATIYNEDPAAQAKAFEDQGFEWLHVVDLNGAFAGESVNGTAVEAILKATKNPVQLGGGIRTLAHIENWLSRGLRRVILGTVAVRDPALVMEACKAFPGQVAVGIDAKGGKVAVEGWAEASRLGVIELAKKFEGAGVAAIIYTDIDRDGVLAGINWDSTLALAEAVSIPVIASGGLASMEDIRRLATPEMRKLEGAISGRALYDGRIDPAEALSVLRAAA</sequence>
<dbReference type="EC" id="5.3.1.16"/>
<dbReference type="EMBL" id="AE008917">
    <property type="protein sequence ID" value="AAL53223.1"/>
    <property type="molecule type" value="Genomic_DNA"/>
</dbReference>
<dbReference type="PIR" id="AD3507">
    <property type="entry name" value="AD3507"/>
</dbReference>
<dbReference type="RefSeq" id="WP_002965150.1">
    <property type="nucleotide sequence ID" value="NZ_GG703778.1"/>
</dbReference>
<dbReference type="SMR" id="Q8YE36"/>
<dbReference type="GeneID" id="97534653"/>
<dbReference type="KEGG" id="bme:BMEI2042"/>
<dbReference type="KEGG" id="bmel:DK63_1451"/>
<dbReference type="PATRIC" id="fig|224914.52.peg.1528"/>
<dbReference type="eggNOG" id="COG0106">
    <property type="taxonomic scope" value="Bacteria"/>
</dbReference>
<dbReference type="PhylomeDB" id="Q8YE36"/>
<dbReference type="UniPathway" id="UPA00031">
    <property type="reaction ID" value="UER00009"/>
</dbReference>
<dbReference type="Proteomes" id="UP000000419">
    <property type="component" value="Chromosome I"/>
</dbReference>
<dbReference type="GO" id="GO:0005737">
    <property type="term" value="C:cytoplasm"/>
    <property type="evidence" value="ECO:0007669"/>
    <property type="project" value="UniProtKB-SubCell"/>
</dbReference>
<dbReference type="GO" id="GO:0003949">
    <property type="term" value="F:1-(5-phosphoribosyl)-5-[(5-phosphoribosylamino)methylideneamino]imidazole-4-carboxamide isomerase activity"/>
    <property type="evidence" value="ECO:0007669"/>
    <property type="project" value="UniProtKB-UniRule"/>
</dbReference>
<dbReference type="GO" id="GO:0000105">
    <property type="term" value="P:L-histidine biosynthetic process"/>
    <property type="evidence" value="ECO:0007669"/>
    <property type="project" value="UniProtKB-UniRule"/>
</dbReference>
<dbReference type="GO" id="GO:0000162">
    <property type="term" value="P:L-tryptophan biosynthetic process"/>
    <property type="evidence" value="ECO:0007669"/>
    <property type="project" value="TreeGrafter"/>
</dbReference>
<dbReference type="CDD" id="cd04732">
    <property type="entry name" value="HisA"/>
    <property type="match status" value="1"/>
</dbReference>
<dbReference type="FunFam" id="3.20.20.70:FF:000009">
    <property type="entry name" value="1-(5-phosphoribosyl)-5-[(5-phosphoribosylamino)methylideneamino] imidazole-4-carboxamide isomerase"/>
    <property type="match status" value="1"/>
</dbReference>
<dbReference type="Gene3D" id="3.20.20.70">
    <property type="entry name" value="Aldolase class I"/>
    <property type="match status" value="1"/>
</dbReference>
<dbReference type="HAMAP" id="MF_01014">
    <property type="entry name" value="HisA"/>
    <property type="match status" value="1"/>
</dbReference>
<dbReference type="InterPro" id="IPR013785">
    <property type="entry name" value="Aldolase_TIM"/>
</dbReference>
<dbReference type="InterPro" id="IPR006062">
    <property type="entry name" value="His_biosynth"/>
</dbReference>
<dbReference type="InterPro" id="IPR006063">
    <property type="entry name" value="HisA_bact_arch"/>
</dbReference>
<dbReference type="InterPro" id="IPR044524">
    <property type="entry name" value="Isoase_HisA-like"/>
</dbReference>
<dbReference type="InterPro" id="IPR023016">
    <property type="entry name" value="Isoase_HisA-like_bact"/>
</dbReference>
<dbReference type="InterPro" id="IPR011060">
    <property type="entry name" value="RibuloseP-bd_barrel"/>
</dbReference>
<dbReference type="NCBIfam" id="TIGR00007">
    <property type="entry name" value="1-(5-phosphoribosyl)-5-[(5-phosphoribosylamino)methylideneamino]imidazole-4-carboxamide isomerase"/>
    <property type="match status" value="1"/>
</dbReference>
<dbReference type="PANTHER" id="PTHR43090">
    <property type="entry name" value="1-(5-PHOSPHORIBOSYL)-5-[(5-PHOSPHORIBOSYLAMINO)METHYLIDENEAMINO] IMIDAZOLE-4-CARBOXAMIDE ISOMERASE"/>
    <property type="match status" value="1"/>
</dbReference>
<dbReference type="PANTHER" id="PTHR43090:SF2">
    <property type="entry name" value="1-(5-PHOSPHORIBOSYL)-5-[(5-PHOSPHORIBOSYLAMINO)METHYLIDENEAMINO] IMIDAZOLE-4-CARBOXAMIDE ISOMERASE"/>
    <property type="match status" value="1"/>
</dbReference>
<dbReference type="Pfam" id="PF00977">
    <property type="entry name" value="His_biosynth"/>
    <property type="match status" value="1"/>
</dbReference>
<dbReference type="SUPFAM" id="SSF51366">
    <property type="entry name" value="Ribulose-phoshate binding barrel"/>
    <property type="match status" value="1"/>
</dbReference>
<organism>
    <name type="scientific">Brucella melitensis biotype 1 (strain ATCC 23456 / CCUG 17765 / NCTC 10094 / 16M)</name>
    <dbReference type="NCBI Taxonomy" id="224914"/>
    <lineage>
        <taxon>Bacteria</taxon>
        <taxon>Pseudomonadati</taxon>
        <taxon>Pseudomonadota</taxon>
        <taxon>Alphaproteobacteria</taxon>
        <taxon>Hyphomicrobiales</taxon>
        <taxon>Brucellaceae</taxon>
        <taxon>Brucella/Ochrobactrum group</taxon>
        <taxon>Brucella</taxon>
    </lineage>
</organism>
<feature type="chain" id="PRO_0000141985" description="1-(5-phosphoribosyl)-5-[(5-phosphoribosylamino)methylideneamino] imidazole-4-carboxamide isomerase">
    <location>
        <begin position="1"/>
        <end position="243"/>
    </location>
</feature>
<feature type="active site" description="Proton acceptor" evidence="1">
    <location>
        <position position="8"/>
    </location>
</feature>
<feature type="active site" description="Proton donor" evidence="1">
    <location>
        <position position="129"/>
    </location>
</feature>
<keyword id="KW-0028">Amino-acid biosynthesis</keyword>
<keyword id="KW-0963">Cytoplasm</keyword>
<keyword id="KW-0368">Histidine biosynthesis</keyword>
<keyword id="KW-0413">Isomerase</keyword>
<reference key="1">
    <citation type="journal article" date="2002" name="Proc. Natl. Acad. Sci. U.S.A.">
        <title>The genome sequence of the facultative intracellular pathogen Brucella melitensis.</title>
        <authorList>
            <person name="DelVecchio V.G."/>
            <person name="Kapatral V."/>
            <person name="Redkar R.J."/>
            <person name="Patra G."/>
            <person name="Mujer C."/>
            <person name="Los T."/>
            <person name="Ivanova N."/>
            <person name="Anderson I."/>
            <person name="Bhattacharyya A."/>
            <person name="Lykidis A."/>
            <person name="Reznik G."/>
            <person name="Jablonski L."/>
            <person name="Larsen N."/>
            <person name="D'Souza M."/>
            <person name="Bernal A."/>
            <person name="Mazur M."/>
            <person name="Goltsman E."/>
            <person name="Selkov E."/>
            <person name="Elzer P.H."/>
            <person name="Hagius S."/>
            <person name="O'Callaghan D."/>
            <person name="Letesson J.-J."/>
            <person name="Haselkorn R."/>
            <person name="Kyrpides N.C."/>
            <person name="Overbeek R."/>
        </authorList>
    </citation>
    <scope>NUCLEOTIDE SEQUENCE [LARGE SCALE GENOMIC DNA]</scope>
    <source>
        <strain>ATCC 23456 / CCUG 17765 / NCTC 10094 / 16M</strain>
    </source>
</reference>